<reference key="1">
    <citation type="submission" date="2006-08" db="EMBL/GenBank/DDBJ databases">
        <title>Complete sequence of chromosome 1 of Burkholderia cepacia AMMD.</title>
        <authorList>
            <person name="Copeland A."/>
            <person name="Lucas S."/>
            <person name="Lapidus A."/>
            <person name="Barry K."/>
            <person name="Detter J.C."/>
            <person name="Glavina del Rio T."/>
            <person name="Hammon N."/>
            <person name="Israni S."/>
            <person name="Pitluck S."/>
            <person name="Bruce D."/>
            <person name="Chain P."/>
            <person name="Malfatti S."/>
            <person name="Shin M."/>
            <person name="Vergez L."/>
            <person name="Schmutz J."/>
            <person name="Larimer F."/>
            <person name="Land M."/>
            <person name="Hauser L."/>
            <person name="Kyrpides N."/>
            <person name="Kim E."/>
            <person name="Parke J."/>
            <person name="Coenye T."/>
            <person name="Konstantinidis K."/>
            <person name="Ramette A."/>
            <person name="Tiedje J."/>
            <person name="Richardson P."/>
        </authorList>
    </citation>
    <scope>NUCLEOTIDE SEQUENCE [LARGE SCALE GENOMIC DNA]</scope>
    <source>
        <strain>ATCC BAA-244 / DSM 16087 / CCUG 44356 / LMG 19182 / AMMD</strain>
    </source>
</reference>
<organism>
    <name type="scientific">Burkholderia ambifaria (strain ATCC BAA-244 / DSM 16087 / CCUG 44356 / LMG 19182 / AMMD)</name>
    <name type="common">Burkholderia cepacia (strain AMMD)</name>
    <dbReference type="NCBI Taxonomy" id="339670"/>
    <lineage>
        <taxon>Bacteria</taxon>
        <taxon>Pseudomonadati</taxon>
        <taxon>Pseudomonadota</taxon>
        <taxon>Betaproteobacteria</taxon>
        <taxon>Burkholderiales</taxon>
        <taxon>Burkholderiaceae</taxon>
        <taxon>Burkholderia</taxon>
        <taxon>Burkholderia cepacia complex</taxon>
    </lineage>
</organism>
<protein>
    <recommendedName>
        <fullName evidence="1">Protein-export protein SecB</fullName>
    </recommendedName>
</protein>
<gene>
    <name evidence="1" type="primary">secB</name>
    <name type="ordered locus">Bamb_2909</name>
</gene>
<keyword id="KW-0143">Chaperone</keyword>
<keyword id="KW-0963">Cytoplasm</keyword>
<keyword id="KW-0653">Protein transport</keyword>
<keyword id="KW-0811">Translocation</keyword>
<keyword id="KW-0813">Transport</keyword>
<evidence type="ECO:0000255" key="1">
    <source>
        <dbReference type="HAMAP-Rule" id="MF_00821"/>
    </source>
</evidence>
<comment type="function">
    <text evidence="1">One of the proteins required for the normal export of preproteins out of the cell cytoplasm. It is a molecular chaperone that binds to a subset of precursor proteins, maintaining them in a translocation-competent state. It also specifically binds to its receptor SecA.</text>
</comment>
<comment type="subunit">
    <text evidence="1">Homotetramer, a dimer of dimers. One homotetramer interacts with 1 SecA dimer.</text>
</comment>
<comment type="subcellular location">
    <subcellularLocation>
        <location evidence="1">Cytoplasm</location>
    </subcellularLocation>
</comment>
<comment type="similarity">
    <text evidence="1">Belongs to the SecB family.</text>
</comment>
<feature type="chain" id="PRO_1000062459" description="Protein-export protein SecB">
    <location>
        <begin position="1"/>
        <end position="159"/>
    </location>
</feature>
<proteinExistence type="inferred from homology"/>
<accession>Q0BBK8</accession>
<dbReference type="EMBL" id="CP000440">
    <property type="protein sequence ID" value="ABI88465.1"/>
    <property type="molecule type" value="Genomic_DNA"/>
</dbReference>
<dbReference type="RefSeq" id="WP_011658008.1">
    <property type="nucleotide sequence ID" value="NZ_CP009798.1"/>
</dbReference>
<dbReference type="SMR" id="Q0BBK8"/>
<dbReference type="GeneID" id="93084889"/>
<dbReference type="KEGG" id="bam:Bamb_2909"/>
<dbReference type="PATRIC" id="fig|339670.21.peg.1971"/>
<dbReference type="eggNOG" id="COG1952">
    <property type="taxonomic scope" value="Bacteria"/>
</dbReference>
<dbReference type="Proteomes" id="UP000000662">
    <property type="component" value="Chromosome 1"/>
</dbReference>
<dbReference type="GO" id="GO:0005737">
    <property type="term" value="C:cytoplasm"/>
    <property type="evidence" value="ECO:0007669"/>
    <property type="project" value="UniProtKB-SubCell"/>
</dbReference>
<dbReference type="GO" id="GO:0051082">
    <property type="term" value="F:unfolded protein binding"/>
    <property type="evidence" value="ECO:0007669"/>
    <property type="project" value="InterPro"/>
</dbReference>
<dbReference type="GO" id="GO:0006457">
    <property type="term" value="P:protein folding"/>
    <property type="evidence" value="ECO:0007669"/>
    <property type="project" value="UniProtKB-UniRule"/>
</dbReference>
<dbReference type="GO" id="GO:0051262">
    <property type="term" value="P:protein tetramerization"/>
    <property type="evidence" value="ECO:0007669"/>
    <property type="project" value="InterPro"/>
</dbReference>
<dbReference type="GO" id="GO:0015031">
    <property type="term" value="P:protein transport"/>
    <property type="evidence" value="ECO:0007669"/>
    <property type="project" value="UniProtKB-UniRule"/>
</dbReference>
<dbReference type="Gene3D" id="3.10.420.10">
    <property type="entry name" value="SecB-like"/>
    <property type="match status" value="1"/>
</dbReference>
<dbReference type="HAMAP" id="MF_00821">
    <property type="entry name" value="SecB"/>
    <property type="match status" value="1"/>
</dbReference>
<dbReference type="InterPro" id="IPR003708">
    <property type="entry name" value="SecB"/>
</dbReference>
<dbReference type="InterPro" id="IPR035958">
    <property type="entry name" value="SecB-like_sf"/>
</dbReference>
<dbReference type="NCBIfam" id="NF004392">
    <property type="entry name" value="PRK05751.1-3"/>
    <property type="match status" value="1"/>
</dbReference>
<dbReference type="NCBIfam" id="NF004394">
    <property type="entry name" value="PRK05751.1-5"/>
    <property type="match status" value="1"/>
</dbReference>
<dbReference type="NCBIfam" id="TIGR00809">
    <property type="entry name" value="secB"/>
    <property type="match status" value="1"/>
</dbReference>
<dbReference type="PANTHER" id="PTHR36918">
    <property type="match status" value="1"/>
</dbReference>
<dbReference type="PANTHER" id="PTHR36918:SF1">
    <property type="entry name" value="PROTEIN-EXPORT PROTEIN SECB"/>
    <property type="match status" value="1"/>
</dbReference>
<dbReference type="Pfam" id="PF02556">
    <property type="entry name" value="SecB"/>
    <property type="match status" value="1"/>
</dbReference>
<dbReference type="PRINTS" id="PR01594">
    <property type="entry name" value="SECBCHAPRONE"/>
</dbReference>
<dbReference type="SUPFAM" id="SSF54611">
    <property type="entry name" value="SecB-like"/>
    <property type="match status" value="1"/>
</dbReference>
<name>SECB_BURCM</name>
<sequence>MSDVENQPFFNIQRVYLKDMSLEQPNSPAIFLEQDMPSVEVEVDVKAERLAESVFEVVVSGTVTAKVKDKVAFLIEAKQAGIFDIRNIPDEQLDPLVGIACPTILFPYLRSNIADAITRAGFPPIHLAEINFQALYEQRLAQLQQQAGAAGAPNGTTLN</sequence>